<protein>
    <recommendedName>
        <fullName evidence="1">NADH-quinone oxidoreductase subunit I</fullName>
        <ecNumber evidence="1">7.1.1.-</ecNumber>
    </recommendedName>
    <alternativeName>
        <fullName evidence="1">NADH dehydrogenase I subunit I</fullName>
    </alternativeName>
    <alternativeName>
        <fullName evidence="1">NDH-1 subunit I</fullName>
    </alternativeName>
</protein>
<dbReference type="EC" id="7.1.1.-" evidence="1"/>
<dbReference type="EMBL" id="AE016825">
    <property type="protein sequence ID" value="AAQ58623.1"/>
    <property type="molecule type" value="Genomic_DNA"/>
</dbReference>
<dbReference type="RefSeq" id="WP_011134504.1">
    <property type="nucleotide sequence ID" value="NC_005085.1"/>
</dbReference>
<dbReference type="SMR" id="Q7NZH3"/>
<dbReference type="STRING" id="243365.CV_0949"/>
<dbReference type="GeneID" id="66366639"/>
<dbReference type="KEGG" id="cvi:CV_0949"/>
<dbReference type="eggNOG" id="COG1143">
    <property type="taxonomic scope" value="Bacteria"/>
</dbReference>
<dbReference type="HOGENOM" id="CLU_067218_5_1_4"/>
<dbReference type="OrthoDB" id="9808559at2"/>
<dbReference type="Proteomes" id="UP000001424">
    <property type="component" value="Chromosome"/>
</dbReference>
<dbReference type="GO" id="GO:0005886">
    <property type="term" value="C:plasma membrane"/>
    <property type="evidence" value="ECO:0007669"/>
    <property type="project" value="UniProtKB-SubCell"/>
</dbReference>
<dbReference type="GO" id="GO:0051539">
    <property type="term" value="F:4 iron, 4 sulfur cluster binding"/>
    <property type="evidence" value="ECO:0007669"/>
    <property type="project" value="UniProtKB-KW"/>
</dbReference>
<dbReference type="GO" id="GO:0005506">
    <property type="term" value="F:iron ion binding"/>
    <property type="evidence" value="ECO:0007669"/>
    <property type="project" value="UniProtKB-UniRule"/>
</dbReference>
<dbReference type="GO" id="GO:0050136">
    <property type="term" value="F:NADH:ubiquinone reductase (non-electrogenic) activity"/>
    <property type="evidence" value="ECO:0007669"/>
    <property type="project" value="UniProtKB-UniRule"/>
</dbReference>
<dbReference type="GO" id="GO:0048038">
    <property type="term" value="F:quinone binding"/>
    <property type="evidence" value="ECO:0007669"/>
    <property type="project" value="UniProtKB-KW"/>
</dbReference>
<dbReference type="GO" id="GO:0009060">
    <property type="term" value="P:aerobic respiration"/>
    <property type="evidence" value="ECO:0007669"/>
    <property type="project" value="TreeGrafter"/>
</dbReference>
<dbReference type="FunFam" id="3.30.70.3270:FF:000003">
    <property type="entry name" value="NADH-quinone oxidoreductase subunit I"/>
    <property type="match status" value="1"/>
</dbReference>
<dbReference type="Gene3D" id="3.30.70.3270">
    <property type="match status" value="1"/>
</dbReference>
<dbReference type="HAMAP" id="MF_01351">
    <property type="entry name" value="NDH1_NuoI"/>
    <property type="match status" value="1"/>
</dbReference>
<dbReference type="InterPro" id="IPR017896">
    <property type="entry name" value="4Fe4S_Fe-S-bd"/>
</dbReference>
<dbReference type="InterPro" id="IPR017900">
    <property type="entry name" value="4Fe4S_Fe_S_CS"/>
</dbReference>
<dbReference type="InterPro" id="IPR010226">
    <property type="entry name" value="NADH_quinone_OxRdtase_chainI"/>
</dbReference>
<dbReference type="NCBIfam" id="TIGR01971">
    <property type="entry name" value="NuoI"/>
    <property type="match status" value="1"/>
</dbReference>
<dbReference type="NCBIfam" id="NF004538">
    <property type="entry name" value="PRK05888.1-4"/>
    <property type="match status" value="1"/>
</dbReference>
<dbReference type="NCBIfam" id="NF004539">
    <property type="entry name" value="PRK05888.1-5"/>
    <property type="match status" value="1"/>
</dbReference>
<dbReference type="PANTHER" id="PTHR10849:SF20">
    <property type="entry name" value="NADH DEHYDROGENASE [UBIQUINONE] IRON-SULFUR PROTEIN 8, MITOCHONDRIAL"/>
    <property type="match status" value="1"/>
</dbReference>
<dbReference type="PANTHER" id="PTHR10849">
    <property type="entry name" value="NADH DEHYDROGENASE UBIQUINONE IRON-SULFUR PROTEIN 8, MITOCHONDRIAL"/>
    <property type="match status" value="1"/>
</dbReference>
<dbReference type="Pfam" id="PF12838">
    <property type="entry name" value="Fer4_7"/>
    <property type="match status" value="1"/>
</dbReference>
<dbReference type="SUPFAM" id="SSF54862">
    <property type="entry name" value="4Fe-4S ferredoxins"/>
    <property type="match status" value="1"/>
</dbReference>
<dbReference type="PROSITE" id="PS00198">
    <property type="entry name" value="4FE4S_FER_1"/>
    <property type="match status" value="2"/>
</dbReference>
<dbReference type="PROSITE" id="PS51379">
    <property type="entry name" value="4FE4S_FER_2"/>
    <property type="match status" value="2"/>
</dbReference>
<organism>
    <name type="scientific">Chromobacterium violaceum (strain ATCC 12472 / DSM 30191 / JCM 1249 / CCUG 213 / NBRC 12614 / NCIMB 9131 / NCTC 9757 / MK)</name>
    <dbReference type="NCBI Taxonomy" id="243365"/>
    <lineage>
        <taxon>Bacteria</taxon>
        <taxon>Pseudomonadati</taxon>
        <taxon>Pseudomonadota</taxon>
        <taxon>Betaproteobacteria</taxon>
        <taxon>Neisseriales</taxon>
        <taxon>Chromobacteriaceae</taxon>
        <taxon>Chromobacterium</taxon>
    </lineage>
</organism>
<keyword id="KW-0004">4Fe-4S</keyword>
<keyword id="KW-0997">Cell inner membrane</keyword>
<keyword id="KW-1003">Cell membrane</keyword>
<keyword id="KW-0408">Iron</keyword>
<keyword id="KW-0411">Iron-sulfur</keyword>
<keyword id="KW-0472">Membrane</keyword>
<keyword id="KW-0479">Metal-binding</keyword>
<keyword id="KW-0520">NAD</keyword>
<keyword id="KW-0874">Quinone</keyword>
<keyword id="KW-1185">Reference proteome</keyword>
<keyword id="KW-0677">Repeat</keyword>
<keyword id="KW-1278">Translocase</keyword>
<keyword id="KW-0830">Ubiquinone</keyword>
<accession>Q7NZH3</accession>
<comment type="function">
    <text evidence="1">NDH-1 shuttles electrons from NADH, via FMN and iron-sulfur (Fe-S) centers, to quinones in the respiratory chain. The immediate electron acceptor for the enzyme in this species is believed to be ubiquinone. Couples the redox reaction to proton translocation (for every two electrons transferred, four hydrogen ions are translocated across the cytoplasmic membrane), and thus conserves the redox energy in a proton gradient.</text>
</comment>
<comment type="catalytic activity">
    <reaction evidence="1">
        <text>a quinone + NADH + 5 H(+)(in) = a quinol + NAD(+) + 4 H(+)(out)</text>
        <dbReference type="Rhea" id="RHEA:57888"/>
        <dbReference type="ChEBI" id="CHEBI:15378"/>
        <dbReference type="ChEBI" id="CHEBI:24646"/>
        <dbReference type="ChEBI" id="CHEBI:57540"/>
        <dbReference type="ChEBI" id="CHEBI:57945"/>
        <dbReference type="ChEBI" id="CHEBI:132124"/>
    </reaction>
</comment>
<comment type="cofactor">
    <cofactor evidence="1">
        <name>[4Fe-4S] cluster</name>
        <dbReference type="ChEBI" id="CHEBI:49883"/>
    </cofactor>
    <text evidence="1">Binds 2 [4Fe-4S] clusters per subunit.</text>
</comment>
<comment type="subunit">
    <text evidence="1">NDH-1 is composed of 14 different subunits. Subunits NuoA, H, J, K, L, M, N constitute the membrane sector of the complex.</text>
</comment>
<comment type="subcellular location">
    <subcellularLocation>
        <location evidence="1">Cell inner membrane</location>
        <topology evidence="1">Peripheral membrane protein</topology>
    </subcellularLocation>
</comment>
<comment type="similarity">
    <text evidence="1">Belongs to the complex I 23 kDa subunit family.</text>
</comment>
<sequence length="162" mass="18628">MNSIRNFFKTFLLVELVKGLMVTGRYFFARKITVQFPEEKTPISPRFRGLHAQRRYANGEERCIACKLCEAVCPAMAISIESEQREDGTRRTSRYDIDLTKCIFCGFCEEACPVDAIVETHIFEYHGEKRGDLYYTKPMLLAIGDKYEAEIAANKAADAKYR</sequence>
<name>NUOI_CHRVO</name>
<evidence type="ECO:0000255" key="1">
    <source>
        <dbReference type="HAMAP-Rule" id="MF_01351"/>
    </source>
</evidence>
<gene>
    <name evidence="1" type="primary">nuoI</name>
    <name type="ordered locus">CV_0949</name>
</gene>
<feature type="chain" id="PRO_0000250898" description="NADH-quinone oxidoreductase subunit I">
    <location>
        <begin position="1"/>
        <end position="162"/>
    </location>
</feature>
<feature type="domain" description="4Fe-4S ferredoxin-type 1" evidence="1">
    <location>
        <begin position="53"/>
        <end position="83"/>
    </location>
</feature>
<feature type="domain" description="4Fe-4S ferredoxin-type 2" evidence="1">
    <location>
        <begin position="93"/>
        <end position="122"/>
    </location>
</feature>
<feature type="binding site" evidence="1">
    <location>
        <position position="63"/>
    </location>
    <ligand>
        <name>[4Fe-4S] cluster</name>
        <dbReference type="ChEBI" id="CHEBI:49883"/>
        <label>1</label>
    </ligand>
</feature>
<feature type="binding site" evidence="1">
    <location>
        <position position="66"/>
    </location>
    <ligand>
        <name>[4Fe-4S] cluster</name>
        <dbReference type="ChEBI" id="CHEBI:49883"/>
        <label>1</label>
    </ligand>
</feature>
<feature type="binding site" evidence="1">
    <location>
        <position position="69"/>
    </location>
    <ligand>
        <name>[4Fe-4S] cluster</name>
        <dbReference type="ChEBI" id="CHEBI:49883"/>
        <label>1</label>
    </ligand>
</feature>
<feature type="binding site" evidence="1">
    <location>
        <position position="73"/>
    </location>
    <ligand>
        <name>[4Fe-4S] cluster</name>
        <dbReference type="ChEBI" id="CHEBI:49883"/>
        <label>2</label>
    </ligand>
</feature>
<feature type="binding site" evidence="1">
    <location>
        <position position="102"/>
    </location>
    <ligand>
        <name>[4Fe-4S] cluster</name>
        <dbReference type="ChEBI" id="CHEBI:49883"/>
        <label>2</label>
    </ligand>
</feature>
<feature type="binding site" evidence="1">
    <location>
        <position position="105"/>
    </location>
    <ligand>
        <name>[4Fe-4S] cluster</name>
        <dbReference type="ChEBI" id="CHEBI:49883"/>
        <label>2</label>
    </ligand>
</feature>
<feature type="binding site" evidence="1">
    <location>
        <position position="108"/>
    </location>
    <ligand>
        <name>[4Fe-4S] cluster</name>
        <dbReference type="ChEBI" id="CHEBI:49883"/>
        <label>2</label>
    </ligand>
</feature>
<feature type="binding site" evidence="1">
    <location>
        <position position="112"/>
    </location>
    <ligand>
        <name>[4Fe-4S] cluster</name>
        <dbReference type="ChEBI" id="CHEBI:49883"/>
        <label>1</label>
    </ligand>
</feature>
<proteinExistence type="inferred from homology"/>
<reference key="1">
    <citation type="journal article" date="2003" name="Proc. Natl. Acad. Sci. U.S.A.">
        <title>The complete genome sequence of Chromobacterium violaceum reveals remarkable and exploitable bacterial adaptability.</title>
        <authorList>
            <person name="Vasconcelos A.T.R."/>
            <person name="de Almeida D.F."/>
            <person name="Hungria M."/>
            <person name="Guimaraes C.T."/>
            <person name="Antonio R.V."/>
            <person name="Almeida F.C."/>
            <person name="de Almeida L.G.P."/>
            <person name="de Almeida R."/>
            <person name="Alves-Gomes J.A."/>
            <person name="Andrade E.M."/>
            <person name="Araripe J."/>
            <person name="de Araujo M.F.F."/>
            <person name="Astolfi-Filho S."/>
            <person name="Azevedo V."/>
            <person name="Baptista A.J."/>
            <person name="Bataus L.A.M."/>
            <person name="Batista J.S."/>
            <person name="Belo A."/>
            <person name="van den Berg C."/>
            <person name="Bogo M."/>
            <person name="Bonatto S."/>
            <person name="Bordignon J."/>
            <person name="Brigido M.M."/>
            <person name="Brito C.A."/>
            <person name="Brocchi M."/>
            <person name="Burity H.A."/>
            <person name="Camargo A.A."/>
            <person name="Cardoso D.D.P."/>
            <person name="Carneiro N.P."/>
            <person name="Carraro D.M."/>
            <person name="Carvalho C.M.B."/>
            <person name="Cascardo J.C.M."/>
            <person name="Cavada B.S."/>
            <person name="Chueire L.M.O."/>
            <person name="Creczynski-Pasa T.B."/>
            <person name="Cunha-Junior N.C."/>
            <person name="Fagundes N."/>
            <person name="Falcao C.L."/>
            <person name="Fantinatti F."/>
            <person name="Farias I.P."/>
            <person name="Felipe M.S.S."/>
            <person name="Ferrari L.P."/>
            <person name="Ferro J.A."/>
            <person name="Ferro M.I.T."/>
            <person name="Franco G.R."/>
            <person name="Freitas N.S.A."/>
            <person name="Furlan L.R."/>
            <person name="Gazzinelli R.T."/>
            <person name="Gomes E.A."/>
            <person name="Goncalves P.R."/>
            <person name="Grangeiro T.B."/>
            <person name="Grattapaglia D."/>
            <person name="Grisard E.C."/>
            <person name="Hanna E.S."/>
            <person name="Jardim S.N."/>
            <person name="Laurino J."/>
            <person name="Leoi L.C.T."/>
            <person name="Lima L.F.A."/>
            <person name="Loureiro M.F."/>
            <person name="Lyra M.C.C.P."/>
            <person name="Madeira H.M.F."/>
            <person name="Manfio G.P."/>
            <person name="Maranhao A.Q."/>
            <person name="Martins W.S."/>
            <person name="di Mauro S.M.Z."/>
            <person name="de Medeiros S.R.B."/>
            <person name="Meissner R.V."/>
            <person name="Moreira M.A.M."/>
            <person name="Nascimento F.F."/>
            <person name="Nicolas M.F."/>
            <person name="Oliveira J.G."/>
            <person name="Oliveira S.C."/>
            <person name="Paixao R.F.C."/>
            <person name="Parente J.A."/>
            <person name="Pedrosa F.O."/>
            <person name="Pena S.D.J."/>
            <person name="Pereira J.O."/>
            <person name="Pereira M."/>
            <person name="Pinto L.S.R.C."/>
            <person name="Pinto L.S."/>
            <person name="Porto J.I.R."/>
            <person name="Potrich D.P."/>
            <person name="Ramalho-Neto C.E."/>
            <person name="Reis A.M.M."/>
            <person name="Rigo L.U."/>
            <person name="Rondinelli E."/>
            <person name="Santos E.B.P."/>
            <person name="Santos F.R."/>
            <person name="Schneider M.P.C."/>
            <person name="Seuanez H.N."/>
            <person name="Silva A.M.R."/>
            <person name="da Silva A.L.C."/>
            <person name="Silva D.W."/>
            <person name="Silva R."/>
            <person name="Simoes I.C."/>
            <person name="Simon D."/>
            <person name="Soares C.M.A."/>
            <person name="Soares R.B.A."/>
            <person name="Souza E.M."/>
            <person name="Souza K.R.L."/>
            <person name="Souza R.C."/>
            <person name="Steffens M.B.R."/>
            <person name="Steindel M."/>
            <person name="Teixeira S.R."/>
            <person name="Urmenyi T."/>
            <person name="Vettore A."/>
            <person name="Wassem R."/>
            <person name="Zaha A."/>
            <person name="Simpson A.J.G."/>
        </authorList>
    </citation>
    <scope>NUCLEOTIDE SEQUENCE [LARGE SCALE GENOMIC DNA]</scope>
    <source>
        <strain>ATCC 12472 / DSM 30191 / JCM 1249 / CCUG 213 / NBRC 12614 / NCIMB 9131 / NCTC 9757 / MK</strain>
    </source>
</reference>